<dbReference type="EMBL" id="JQFZ01000250">
    <property type="protein sequence ID" value="KGO53486.1"/>
    <property type="molecule type" value="Genomic_DNA"/>
</dbReference>
<dbReference type="RefSeq" id="XP_016596088.1">
    <property type="nucleotide sequence ID" value="XM_016743366.1"/>
</dbReference>
<dbReference type="SMR" id="A0A0A2JFC6"/>
<dbReference type="STRING" id="27334.A0A0A2JFC6"/>
<dbReference type="GeneID" id="27678785"/>
<dbReference type="VEuPathDB" id="FungiDB:PEXP_068330"/>
<dbReference type="HOGENOM" id="CLU_363323_0_0_1"/>
<dbReference type="Proteomes" id="UP000030143">
    <property type="component" value="Unassembled WGS sequence"/>
</dbReference>
<dbReference type="GO" id="GO:0016020">
    <property type="term" value="C:membrane"/>
    <property type="evidence" value="ECO:0007669"/>
    <property type="project" value="UniProtKB-SubCell"/>
</dbReference>
<dbReference type="GO" id="GO:0008061">
    <property type="term" value="F:chitin binding"/>
    <property type="evidence" value="ECO:0007669"/>
    <property type="project" value="UniProtKB-KW"/>
</dbReference>
<dbReference type="CDD" id="cd00035">
    <property type="entry name" value="ChtBD1"/>
    <property type="match status" value="1"/>
</dbReference>
<dbReference type="Gene3D" id="3.30.60.10">
    <property type="entry name" value="Endochitinase-like"/>
    <property type="match status" value="1"/>
</dbReference>
<dbReference type="Gene3D" id="3.10.350.10">
    <property type="entry name" value="LysM domain"/>
    <property type="match status" value="2"/>
</dbReference>
<dbReference type="InterPro" id="IPR036861">
    <property type="entry name" value="Endochitinase-like_sf"/>
</dbReference>
<dbReference type="InterPro" id="IPR053214">
    <property type="entry name" value="LysM12-like"/>
</dbReference>
<dbReference type="InterPro" id="IPR018392">
    <property type="entry name" value="LysM_dom"/>
</dbReference>
<dbReference type="InterPro" id="IPR036779">
    <property type="entry name" value="LysM_dom_sf"/>
</dbReference>
<dbReference type="PANTHER" id="PTHR47700:SF2">
    <property type="entry name" value="CHITINASE"/>
    <property type="match status" value="1"/>
</dbReference>
<dbReference type="PANTHER" id="PTHR47700">
    <property type="entry name" value="V CHITINASE, PUTATIVE (AFU_ORTHOLOGUE AFUA_6G13720)-RELATED"/>
    <property type="match status" value="1"/>
</dbReference>
<dbReference type="Pfam" id="PF01476">
    <property type="entry name" value="LysM"/>
    <property type="match status" value="2"/>
</dbReference>
<dbReference type="SMART" id="SM00257">
    <property type="entry name" value="LysM"/>
    <property type="match status" value="2"/>
</dbReference>
<dbReference type="SUPFAM" id="SSF54106">
    <property type="entry name" value="LysM domain"/>
    <property type="match status" value="1"/>
</dbReference>
<dbReference type="SUPFAM" id="SSF57016">
    <property type="entry name" value="Plant lectins/antimicrobial peptides"/>
    <property type="match status" value="1"/>
</dbReference>
<dbReference type="PROSITE" id="PS51782">
    <property type="entry name" value="LYSM"/>
    <property type="match status" value="2"/>
</dbReference>
<name>LYS17_PENEN</name>
<reference key="1">
    <citation type="journal article" date="2015" name="Mol. Plant Microbe Interact.">
        <title>Genome, transcriptome, and functional analyses of Penicillium expansum provide new insights into secondary metabolism and pathogenicity.</title>
        <authorList>
            <person name="Ballester A.R."/>
            <person name="Marcet-Houben M."/>
            <person name="Levin E."/>
            <person name="Sela N."/>
            <person name="Selma-Lazaro C."/>
            <person name="Carmona L."/>
            <person name="Wisniewski M."/>
            <person name="Droby S."/>
            <person name="Gonzalez-Candelas L."/>
            <person name="Gabaldon T."/>
        </authorList>
    </citation>
    <scope>NUCLEOTIDE SEQUENCE [LARGE SCALE GENOMIC DNA]</scope>
    <source>
        <strain>MD-8</strain>
    </source>
</reference>
<reference key="2">
    <citation type="journal article" date="2020" name="Mol. Genet. Genomics">
        <title>Multiple transcriptomic analyses and characterization of pathogen-related core effectors and LysM family members reveal their differential roles in fungal growth and pathogenicity in Penicillium expansum.</title>
        <authorList>
            <person name="Chen D."/>
            <person name="Li G."/>
            <person name="Liu J."/>
            <person name="Wisniewski M."/>
            <person name="Droby S."/>
            <person name="Levin E."/>
            <person name="Huang S."/>
            <person name="Liu Y."/>
        </authorList>
    </citation>
    <scope>FUNCTION</scope>
    <scope>DISRUPTION PHENOTYPE</scope>
    <scope>DOMAIN</scope>
</reference>
<evidence type="ECO:0000255" key="1"/>
<evidence type="ECO:0000255" key="2">
    <source>
        <dbReference type="PROSITE-ProRule" id="PRU00498"/>
    </source>
</evidence>
<evidence type="ECO:0000255" key="3">
    <source>
        <dbReference type="PROSITE-ProRule" id="PRU01118"/>
    </source>
</evidence>
<evidence type="ECO:0000269" key="4">
    <source>
    </source>
</evidence>
<evidence type="ECO:0000303" key="5">
    <source>
    </source>
</evidence>
<evidence type="ECO:0000305" key="6"/>
<evidence type="ECO:0000305" key="7">
    <source>
    </source>
</evidence>
<keyword id="KW-0147">Chitin-binding</keyword>
<keyword id="KW-0325">Glycoprotein</keyword>
<keyword id="KW-0472">Membrane</keyword>
<keyword id="KW-1185">Reference proteome</keyword>
<keyword id="KW-0677">Repeat</keyword>
<keyword id="KW-0812">Transmembrane</keyword>
<keyword id="KW-1133">Transmembrane helix</keyword>
<keyword id="KW-0843">Virulence</keyword>
<gene>
    <name evidence="5" type="primary">LysM17</name>
    <name type="ORF">PEX2_060940</name>
</gene>
<accession>A0A0A2JFC6</accession>
<proteinExistence type="inferred from homology"/>
<sequence>MGPNPGPKAQPAPIRGFGVKIDQYTNDVDLKDEANVKLWEAIGDHISLVTKFLAGGGPTDYGAGGKPLLFCGAEAGVHQPWDTSIVKDHEGKNVVTDRDPKTKMPTKYLNLGLAFMGVSRNPNANAFWMSKFDGYDLDYDDDTSLCAENPKDGRLRYAKVAKRPFIRYTKMRLPPLATAIPLAVVWASLASVINANKAANALLASISVSTVSGTAPGRPTELVSAQEAILAGDYTKRLHYQGRDVCPVGCSNAGIDTSSWFVYGSLNRLDRACDRPMLLDFALANPIDTQKSHVAISACTADYENFSSFVPSSDSATSCASKVAEQAEVTFPLLLKSSGASSSQHVADVTSALEQLQAFAILSNSGCNETIKYFYSGDVIVGVYAGSGLAGQGVLSTVLEKLSTRIKDDGSVAESWSVEMCSNSSARYSLSVLVNTKGKFGAVQRGLQASKNGTCFSTETEIAASDWETVTYLAASASSITSTANPNKLTSYRATACRTIQVVSGDSCASLATQCGITAAQFTKYNSDPSLCSGLTPGKHVCCSPGTLPDFTPKPSADGYCYSNLVKSGDSCASLAAANDLTNAKIESFNKMTWGWNGCEKPFAKYKICLSTGYPPMPATIPNAVCGPQVNDTVKAPPETDLSTLNECPLNACCNIWGQCGTTGDFCTPSNSSTGAPGTAAPGKNGCISNCGTNIVTSSAPGKTYNVSYHDLGGRPPRPPFGEYNSKDSRIPANFSCERVVQLAMEMGHSTIVQLLIDAGADTSLPHPL</sequence>
<feature type="chain" id="PRO_0000460669" description="Non-secreted LysM effector LysM17">
    <location>
        <begin position="1"/>
        <end position="769"/>
    </location>
</feature>
<feature type="transmembrane region" description="Helical" evidence="1">
    <location>
        <begin position="173"/>
        <end position="193"/>
    </location>
</feature>
<feature type="domain" description="LysM 1" evidence="3">
    <location>
        <begin position="498"/>
        <end position="543"/>
    </location>
</feature>
<feature type="domain" description="LysM 2" evidence="3">
    <location>
        <begin position="562"/>
        <end position="610"/>
    </location>
</feature>
<feature type="glycosylation site" description="N-linked (GlcNAc...) asparagine" evidence="2">
    <location>
        <position position="305"/>
    </location>
</feature>
<feature type="glycosylation site" description="N-linked (GlcNAc...) asparagine" evidence="2">
    <location>
        <position position="368"/>
    </location>
</feature>
<feature type="glycosylation site" description="N-linked (GlcNAc...) asparagine" evidence="2">
    <location>
        <position position="423"/>
    </location>
</feature>
<feature type="glycosylation site" description="N-linked (GlcNAc...) asparagine" evidence="2">
    <location>
        <position position="452"/>
    </location>
</feature>
<feature type="glycosylation site" description="N-linked (GlcNAc...) asparagine" evidence="2">
    <location>
        <position position="631"/>
    </location>
</feature>
<feature type="glycosylation site" description="N-linked (GlcNAc...) asparagine" evidence="2">
    <location>
        <position position="671"/>
    </location>
</feature>
<feature type="glycosylation site" description="N-linked (GlcNAc...) asparagine" evidence="2">
    <location>
        <position position="706"/>
    </location>
</feature>
<feature type="glycosylation site" description="N-linked (GlcNAc...) asparagine" evidence="2">
    <location>
        <position position="734"/>
    </location>
</feature>
<protein>
    <recommendedName>
        <fullName evidence="5">Non-secreted LysM effector LysM17</fullName>
    </recommendedName>
    <alternativeName>
        <fullName evidence="5">LysM domain-containing protein 17</fullName>
    </alternativeName>
</protein>
<comment type="function">
    <text evidence="7">Non-secreted LysM effector that might be involved in manipulation of host defenses for successful infection.</text>
</comment>
<comment type="subcellular location">
    <subcellularLocation>
        <location evidence="1">Membrane</location>
        <topology evidence="1">Single-pass membrane protein</topology>
    </subcellularLocation>
</comment>
<comment type="domain">
    <text evidence="7">The LysM (lysin motif) domains are small globular domains involved in binding chitin in eukaryotes. LysM1 contains one LysM domain.</text>
</comment>
<comment type="disruption phenotype">
    <text evidence="4">Show no significant difference in the expansion rate of lesion diameters in apples fruits.</text>
</comment>
<comment type="miscellaneous">
    <text evidence="6">In plants, chitin acts as a microbe-associated molecular pattern (MAMP) that is recognized by lysin motif (LysM)-containing plant cell surface-localized pattern recognition receptors (PRRs) that activate a plethora of downstream immune responses.</text>
</comment>
<comment type="similarity">
    <text evidence="6">Belongs to the secreted LysM effector family.</text>
</comment>
<organism>
    <name type="scientific">Penicillium expansum</name>
    <name type="common">Blue mold rot fungus</name>
    <dbReference type="NCBI Taxonomy" id="27334"/>
    <lineage>
        <taxon>Eukaryota</taxon>
        <taxon>Fungi</taxon>
        <taxon>Dikarya</taxon>
        <taxon>Ascomycota</taxon>
        <taxon>Pezizomycotina</taxon>
        <taxon>Eurotiomycetes</taxon>
        <taxon>Eurotiomycetidae</taxon>
        <taxon>Eurotiales</taxon>
        <taxon>Aspergillaceae</taxon>
        <taxon>Penicillium</taxon>
    </lineage>
</organism>